<comment type="function">
    <text evidence="1">Catalyzes the formation of 4-diphosphocytidyl-2-C-methyl-D-erythritol from CTP and 2-C-methyl-D-erythritol 4-phosphate (MEP).</text>
</comment>
<comment type="catalytic activity">
    <reaction evidence="1">
        <text>2-C-methyl-D-erythritol 4-phosphate + CTP + H(+) = 4-CDP-2-C-methyl-D-erythritol + diphosphate</text>
        <dbReference type="Rhea" id="RHEA:13429"/>
        <dbReference type="ChEBI" id="CHEBI:15378"/>
        <dbReference type="ChEBI" id="CHEBI:33019"/>
        <dbReference type="ChEBI" id="CHEBI:37563"/>
        <dbReference type="ChEBI" id="CHEBI:57823"/>
        <dbReference type="ChEBI" id="CHEBI:58262"/>
        <dbReference type="EC" id="2.7.7.60"/>
    </reaction>
</comment>
<comment type="pathway">
    <text evidence="1">Isoprenoid biosynthesis; isopentenyl diphosphate biosynthesis via DXP pathway; isopentenyl diphosphate from 1-deoxy-D-xylulose 5-phosphate: step 2/6.</text>
</comment>
<comment type="similarity">
    <text evidence="1">Belongs to the IspD/TarI cytidylyltransferase family. IspD subfamily.</text>
</comment>
<feature type="chain" id="PRO_0000075602" description="2-C-methyl-D-erythritol 4-phosphate cytidylyltransferase">
    <location>
        <begin position="1"/>
        <end position="225"/>
    </location>
</feature>
<feature type="site" description="Transition state stabilizer" evidence="1">
    <location>
        <position position="13"/>
    </location>
</feature>
<feature type="site" description="Transition state stabilizer" evidence="1">
    <location>
        <position position="20"/>
    </location>
</feature>
<feature type="site" description="Positions MEP for the nucleophilic attack" evidence="1">
    <location>
        <position position="150"/>
    </location>
</feature>
<feature type="site" description="Positions MEP for the nucleophilic attack" evidence="1">
    <location>
        <position position="206"/>
    </location>
</feature>
<keyword id="KW-0414">Isoprene biosynthesis</keyword>
<keyword id="KW-0548">Nucleotidyltransferase</keyword>
<keyword id="KW-1185">Reference proteome</keyword>
<keyword id="KW-0808">Transferase</keyword>
<dbReference type="EC" id="2.7.7.60" evidence="1"/>
<dbReference type="EMBL" id="BX548175">
    <property type="protein sequence ID" value="CAE21505.1"/>
    <property type="molecule type" value="Genomic_DNA"/>
</dbReference>
<dbReference type="RefSeq" id="WP_011130698.1">
    <property type="nucleotide sequence ID" value="NC_005071.1"/>
</dbReference>
<dbReference type="SMR" id="Q7V647"/>
<dbReference type="KEGG" id="pmt:PMT_1330"/>
<dbReference type="eggNOG" id="COG1211">
    <property type="taxonomic scope" value="Bacteria"/>
</dbReference>
<dbReference type="HOGENOM" id="CLU_061281_1_0_3"/>
<dbReference type="OrthoDB" id="9806837at2"/>
<dbReference type="UniPathway" id="UPA00056">
    <property type="reaction ID" value="UER00093"/>
</dbReference>
<dbReference type="Proteomes" id="UP000001423">
    <property type="component" value="Chromosome"/>
</dbReference>
<dbReference type="GO" id="GO:0050518">
    <property type="term" value="F:2-C-methyl-D-erythritol 4-phosphate cytidylyltransferase activity"/>
    <property type="evidence" value="ECO:0007669"/>
    <property type="project" value="UniProtKB-UniRule"/>
</dbReference>
<dbReference type="GO" id="GO:0019288">
    <property type="term" value="P:isopentenyl diphosphate biosynthetic process, methylerythritol 4-phosphate pathway"/>
    <property type="evidence" value="ECO:0007669"/>
    <property type="project" value="UniProtKB-UniRule"/>
</dbReference>
<dbReference type="CDD" id="cd02516">
    <property type="entry name" value="CDP-ME_synthetase"/>
    <property type="match status" value="1"/>
</dbReference>
<dbReference type="FunFam" id="3.90.550.10:FF:000003">
    <property type="entry name" value="2-C-methyl-D-erythritol 4-phosphate cytidylyltransferase"/>
    <property type="match status" value="1"/>
</dbReference>
<dbReference type="Gene3D" id="3.90.550.10">
    <property type="entry name" value="Spore Coat Polysaccharide Biosynthesis Protein SpsA, Chain A"/>
    <property type="match status" value="1"/>
</dbReference>
<dbReference type="HAMAP" id="MF_00108">
    <property type="entry name" value="IspD"/>
    <property type="match status" value="1"/>
</dbReference>
<dbReference type="InterPro" id="IPR001228">
    <property type="entry name" value="IspD"/>
</dbReference>
<dbReference type="InterPro" id="IPR034683">
    <property type="entry name" value="IspD/TarI"/>
</dbReference>
<dbReference type="InterPro" id="IPR050088">
    <property type="entry name" value="IspD/TarI_cytidylyltransf_bact"/>
</dbReference>
<dbReference type="InterPro" id="IPR018294">
    <property type="entry name" value="ISPD_synthase_CS"/>
</dbReference>
<dbReference type="InterPro" id="IPR029044">
    <property type="entry name" value="Nucleotide-diphossugar_trans"/>
</dbReference>
<dbReference type="NCBIfam" id="TIGR00453">
    <property type="entry name" value="ispD"/>
    <property type="match status" value="1"/>
</dbReference>
<dbReference type="PANTHER" id="PTHR32125">
    <property type="entry name" value="2-C-METHYL-D-ERYTHRITOL 4-PHOSPHATE CYTIDYLYLTRANSFERASE, CHLOROPLASTIC"/>
    <property type="match status" value="1"/>
</dbReference>
<dbReference type="PANTHER" id="PTHR32125:SF4">
    <property type="entry name" value="2-C-METHYL-D-ERYTHRITOL 4-PHOSPHATE CYTIDYLYLTRANSFERASE, CHLOROPLASTIC"/>
    <property type="match status" value="1"/>
</dbReference>
<dbReference type="Pfam" id="PF01128">
    <property type="entry name" value="IspD"/>
    <property type="match status" value="1"/>
</dbReference>
<dbReference type="SUPFAM" id="SSF53448">
    <property type="entry name" value="Nucleotide-diphospho-sugar transferases"/>
    <property type="match status" value="1"/>
</dbReference>
<dbReference type="PROSITE" id="PS01295">
    <property type="entry name" value="ISPD"/>
    <property type="match status" value="1"/>
</dbReference>
<reference key="1">
    <citation type="journal article" date="2003" name="Nature">
        <title>Genome divergence in two Prochlorococcus ecotypes reflects oceanic niche differentiation.</title>
        <authorList>
            <person name="Rocap G."/>
            <person name="Larimer F.W."/>
            <person name="Lamerdin J.E."/>
            <person name="Malfatti S."/>
            <person name="Chain P."/>
            <person name="Ahlgren N.A."/>
            <person name="Arellano A."/>
            <person name="Coleman M."/>
            <person name="Hauser L."/>
            <person name="Hess W.R."/>
            <person name="Johnson Z.I."/>
            <person name="Land M.L."/>
            <person name="Lindell D."/>
            <person name="Post A.F."/>
            <person name="Regala W."/>
            <person name="Shah M."/>
            <person name="Shaw S.L."/>
            <person name="Steglich C."/>
            <person name="Sullivan M.B."/>
            <person name="Ting C.S."/>
            <person name="Tolonen A."/>
            <person name="Webb E.A."/>
            <person name="Zinser E.R."/>
            <person name="Chisholm S.W."/>
        </authorList>
    </citation>
    <scope>NUCLEOTIDE SEQUENCE [LARGE SCALE GENOMIC DNA]</scope>
    <source>
        <strain>MIT 9313</strain>
    </source>
</reference>
<evidence type="ECO:0000255" key="1">
    <source>
        <dbReference type="HAMAP-Rule" id="MF_00108"/>
    </source>
</evidence>
<gene>
    <name evidence="1" type="primary">ispD</name>
    <name type="ordered locus">PMT_1330</name>
</gene>
<name>ISPD_PROMM</name>
<sequence>MHLLIVAAGSGSRMGADRNKLLLPLAGRPVLAWTIDAVMEADSITWVGIVGQPVDRAMIMELLAEAAKPVVWIEGGSTRQESVERGLQALPSVAQHVLIHDGARCLAEAALINRCAEAVVAGAAVIAATPVTDTIKRVDGQGIITGTPDRAELWAAQTPQGFAVEQLKQGHAEAQAKGWTVTDDASLYERLGWPVQVLEASPANIKVTTPFDLTVAEAVIALRAN</sequence>
<protein>
    <recommendedName>
        <fullName evidence="1">2-C-methyl-D-erythritol 4-phosphate cytidylyltransferase</fullName>
        <ecNumber evidence="1">2.7.7.60</ecNumber>
    </recommendedName>
    <alternativeName>
        <fullName evidence="1">4-diphosphocytidyl-2C-methyl-D-erythritol synthase</fullName>
    </alternativeName>
    <alternativeName>
        <fullName evidence="1">MEP cytidylyltransferase</fullName>
        <shortName evidence="1">MCT</shortName>
    </alternativeName>
</protein>
<proteinExistence type="inferred from homology"/>
<accession>Q7V647</accession>
<organism>
    <name type="scientific">Prochlorococcus marinus (strain MIT 9313)</name>
    <dbReference type="NCBI Taxonomy" id="74547"/>
    <lineage>
        <taxon>Bacteria</taxon>
        <taxon>Bacillati</taxon>
        <taxon>Cyanobacteriota</taxon>
        <taxon>Cyanophyceae</taxon>
        <taxon>Synechococcales</taxon>
        <taxon>Prochlorococcaceae</taxon>
        <taxon>Prochlorococcus</taxon>
    </lineage>
</organism>